<name>SESN3_MOUSE</name>
<accession>Q9CYP7</accession>
<accession>Q3U2A0</accession>
<keyword id="KW-0963">Cytoplasm</keyword>
<keyword id="KW-0560">Oxidoreductase</keyword>
<keyword id="KW-1185">Reference proteome</keyword>
<dbReference type="EC" id="1.11.1.-" evidence="1"/>
<dbReference type="EMBL" id="AK017464">
    <property type="protein sequence ID" value="BAB30755.1"/>
    <property type="molecule type" value="mRNA"/>
</dbReference>
<dbReference type="EMBL" id="AK155398">
    <property type="protein sequence ID" value="BAE33242.1"/>
    <property type="molecule type" value="mRNA"/>
</dbReference>
<dbReference type="CCDS" id="CCDS22820.1"/>
<dbReference type="RefSeq" id="NP_084537.2">
    <property type="nucleotide sequence ID" value="NM_030261.4"/>
</dbReference>
<dbReference type="SMR" id="Q9CYP7"/>
<dbReference type="FunCoup" id="Q9CYP7">
    <property type="interactions" value="387"/>
</dbReference>
<dbReference type="IntAct" id="Q9CYP7">
    <property type="interactions" value="1"/>
</dbReference>
<dbReference type="STRING" id="10090.ENSMUSP00000146362"/>
<dbReference type="iPTMnet" id="Q9CYP7"/>
<dbReference type="PhosphoSitePlus" id="Q9CYP7"/>
<dbReference type="PaxDb" id="10090-ENSMUSP00000034507"/>
<dbReference type="ProteomicsDB" id="256781"/>
<dbReference type="Pumba" id="Q9CYP7"/>
<dbReference type="Antibodypedia" id="31660">
    <property type="antibodies" value="225 antibodies from 31 providers"/>
</dbReference>
<dbReference type="DNASU" id="75747"/>
<dbReference type="Ensembl" id="ENSMUST00000208222.2">
    <property type="protein sequence ID" value="ENSMUSP00000146362.2"/>
    <property type="gene ID" value="ENSMUSG00000032009.9"/>
</dbReference>
<dbReference type="GeneID" id="75747"/>
<dbReference type="KEGG" id="mmu:75747"/>
<dbReference type="UCSC" id="uc009oej.1">
    <property type="organism name" value="mouse"/>
</dbReference>
<dbReference type="AGR" id="MGI:1922997"/>
<dbReference type="CTD" id="143686"/>
<dbReference type="MGI" id="MGI:1922997">
    <property type="gene designation" value="Sesn3"/>
</dbReference>
<dbReference type="VEuPathDB" id="HostDB:ENSMUSG00000032009"/>
<dbReference type="eggNOG" id="KOG3746">
    <property type="taxonomic scope" value="Eukaryota"/>
</dbReference>
<dbReference type="GeneTree" id="ENSGT00950000183168"/>
<dbReference type="HOGENOM" id="CLU_020429_2_0_1"/>
<dbReference type="InParanoid" id="Q9CYP7"/>
<dbReference type="OMA" id="CSYLINI"/>
<dbReference type="OrthoDB" id="337464at2759"/>
<dbReference type="PhylomeDB" id="Q9CYP7"/>
<dbReference type="TreeFam" id="TF314230"/>
<dbReference type="Reactome" id="R-MMU-5628897">
    <property type="pathway name" value="TP53 Regulates Metabolic Genes"/>
</dbReference>
<dbReference type="BioGRID-ORCS" id="75747">
    <property type="hits" value="1 hit in 77 CRISPR screens"/>
</dbReference>
<dbReference type="ChiTaRS" id="Sesn3">
    <property type="organism name" value="mouse"/>
</dbReference>
<dbReference type="PRO" id="PR:Q9CYP7"/>
<dbReference type="Proteomes" id="UP000000589">
    <property type="component" value="Chromosome 9"/>
</dbReference>
<dbReference type="RNAct" id="Q9CYP7">
    <property type="molecule type" value="protein"/>
</dbReference>
<dbReference type="Bgee" id="ENSMUSG00000032009">
    <property type="expression patterns" value="Expressed in ventromedial nucleus of hypothalamus and 236 other cell types or tissues"/>
</dbReference>
<dbReference type="ExpressionAtlas" id="Q9CYP7">
    <property type="expression patterns" value="baseline and differential"/>
</dbReference>
<dbReference type="GO" id="GO:0005737">
    <property type="term" value="C:cytoplasm"/>
    <property type="evidence" value="ECO:0000250"/>
    <property type="project" value="UniProtKB"/>
</dbReference>
<dbReference type="GO" id="GO:0061700">
    <property type="term" value="C:GATOR2 complex"/>
    <property type="evidence" value="ECO:0007669"/>
    <property type="project" value="Ensembl"/>
</dbReference>
<dbReference type="GO" id="GO:0005634">
    <property type="term" value="C:nucleus"/>
    <property type="evidence" value="ECO:0007669"/>
    <property type="project" value="InterPro"/>
</dbReference>
<dbReference type="GO" id="GO:0016491">
    <property type="term" value="F:oxidoreductase activity"/>
    <property type="evidence" value="ECO:0007669"/>
    <property type="project" value="UniProtKB-KW"/>
</dbReference>
<dbReference type="GO" id="GO:0034198">
    <property type="term" value="P:cellular response to amino acid starvation"/>
    <property type="evidence" value="ECO:0000250"/>
    <property type="project" value="UniProtKB"/>
</dbReference>
<dbReference type="GO" id="GO:0071230">
    <property type="term" value="P:cellular response to amino acid stimulus"/>
    <property type="evidence" value="ECO:0000315"/>
    <property type="project" value="UniProtKB"/>
</dbReference>
<dbReference type="GO" id="GO:0042149">
    <property type="term" value="P:cellular response to glucose starvation"/>
    <property type="evidence" value="ECO:0007669"/>
    <property type="project" value="Ensembl"/>
</dbReference>
<dbReference type="GO" id="GO:0042593">
    <property type="term" value="P:glucose homeostasis"/>
    <property type="evidence" value="ECO:0000315"/>
    <property type="project" value="UniProtKB"/>
</dbReference>
<dbReference type="GO" id="GO:1904262">
    <property type="term" value="P:negative regulation of TORC1 signaling"/>
    <property type="evidence" value="ECO:0000315"/>
    <property type="project" value="UniProtKB"/>
</dbReference>
<dbReference type="GO" id="GO:0046626">
    <property type="term" value="P:regulation of insulin receptor signaling pathway"/>
    <property type="evidence" value="ECO:0000315"/>
    <property type="project" value="UniProtKB"/>
</dbReference>
<dbReference type="GO" id="GO:0051896">
    <property type="term" value="P:regulation of phosphatidylinositol 3-kinase/protein kinase B signal transduction"/>
    <property type="evidence" value="ECO:0000314"/>
    <property type="project" value="MGI"/>
</dbReference>
<dbReference type="GO" id="GO:1901031">
    <property type="term" value="P:regulation of response to reactive oxygen species"/>
    <property type="evidence" value="ECO:0007669"/>
    <property type="project" value="InterPro"/>
</dbReference>
<dbReference type="GO" id="GO:0032868">
    <property type="term" value="P:response to insulin"/>
    <property type="evidence" value="ECO:0000315"/>
    <property type="project" value="UniProtKB"/>
</dbReference>
<dbReference type="GO" id="GO:0038203">
    <property type="term" value="P:TORC2 signaling"/>
    <property type="evidence" value="ECO:0000315"/>
    <property type="project" value="UniProtKB"/>
</dbReference>
<dbReference type="FunFam" id="1.20.1290.10:FF:000001">
    <property type="entry name" value="Sestrin 1"/>
    <property type="match status" value="1"/>
</dbReference>
<dbReference type="Gene3D" id="1.20.1290.10">
    <property type="entry name" value="AhpD-like"/>
    <property type="match status" value="1"/>
</dbReference>
<dbReference type="InterPro" id="IPR029032">
    <property type="entry name" value="AhpD-like"/>
</dbReference>
<dbReference type="InterPro" id="IPR006730">
    <property type="entry name" value="Sestrin"/>
</dbReference>
<dbReference type="PANTHER" id="PTHR12474">
    <property type="entry name" value="P53 REGULATED PA26 NUCLEAR PROTEIN SESTRIN"/>
    <property type="match status" value="1"/>
</dbReference>
<dbReference type="PANTHER" id="PTHR12474:SF4">
    <property type="entry name" value="SESTRIN-3"/>
    <property type="match status" value="1"/>
</dbReference>
<dbReference type="Pfam" id="PF04636">
    <property type="entry name" value="PA26"/>
    <property type="match status" value="1"/>
</dbReference>
<dbReference type="SUPFAM" id="SSF69118">
    <property type="entry name" value="AhpD-like"/>
    <property type="match status" value="1"/>
</dbReference>
<protein>
    <recommendedName>
        <fullName evidence="6">Sestrin-3</fullName>
        <ecNumber evidence="1">1.11.1.-</ecNumber>
    </recommendedName>
</protein>
<feature type="chain" id="PRO_0000221184" description="Sestrin-3">
    <location>
        <begin position="1"/>
        <end position="492"/>
    </location>
</feature>
<feature type="region of interest" description="N-terminal domain; may mediate the alkylhydroperoxide reductase activity" evidence="1">
    <location>
        <begin position="62"/>
        <end position="243"/>
    </location>
</feature>
<feature type="region of interest" description="C-terminal domain; mediates TORC1 regulation" evidence="1">
    <location>
        <begin position="310"/>
        <end position="492"/>
    </location>
</feature>
<feature type="active site" description="Cysteine sulfenic acid (-SOH) intermediate" evidence="1">
    <location>
        <position position="121"/>
    </location>
</feature>
<feature type="binding site" evidence="1">
    <location>
        <begin position="386"/>
        <end position="389"/>
    </location>
    <ligand>
        <name>L-leucine</name>
        <dbReference type="ChEBI" id="CHEBI:57427"/>
    </ligand>
</feature>
<feature type="binding site" evidence="1">
    <location>
        <position position="398"/>
    </location>
    <ligand>
        <name>L-leucine</name>
        <dbReference type="ChEBI" id="CHEBI:57427"/>
    </ligand>
</feature>
<feature type="binding site" evidence="1">
    <location>
        <position position="463"/>
    </location>
    <ligand>
        <name>L-leucine</name>
        <dbReference type="ChEBI" id="CHEBI:57427"/>
    </ligand>
</feature>
<organism>
    <name type="scientific">Mus musculus</name>
    <name type="common">Mouse</name>
    <dbReference type="NCBI Taxonomy" id="10090"/>
    <lineage>
        <taxon>Eukaryota</taxon>
        <taxon>Metazoa</taxon>
        <taxon>Chordata</taxon>
        <taxon>Craniata</taxon>
        <taxon>Vertebrata</taxon>
        <taxon>Euteleostomi</taxon>
        <taxon>Mammalia</taxon>
        <taxon>Eutheria</taxon>
        <taxon>Euarchontoglires</taxon>
        <taxon>Glires</taxon>
        <taxon>Rodentia</taxon>
        <taxon>Myomorpha</taxon>
        <taxon>Muroidea</taxon>
        <taxon>Muridae</taxon>
        <taxon>Murinae</taxon>
        <taxon>Mus</taxon>
        <taxon>Mus</taxon>
    </lineage>
</organism>
<reference key="1">
    <citation type="journal article" date="2005" name="Science">
        <title>The transcriptional landscape of the mammalian genome.</title>
        <authorList>
            <person name="Carninci P."/>
            <person name="Kasukawa T."/>
            <person name="Katayama S."/>
            <person name="Gough J."/>
            <person name="Frith M.C."/>
            <person name="Maeda N."/>
            <person name="Oyama R."/>
            <person name="Ravasi T."/>
            <person name="Lenhard B."/>
            <person name="Wells C."/>
            <person name="Kodzius R."/>
            <person name="Shimokawa K."/>
            <person name="Bajic V.B."/>
            <person name="Brenner S.E."/>
            <person name="Batalov S."/>
            <person name="Forrest A.R."/>
            <person name="Zavolan M."/>
            <person name="Davis M.J."/>
            <person name="Wilming L.G."/>
            <person name="Aidinis V."/>
            <person name="Allen J.E."/>
            <person name="Ambesi-Impiombato A."/>
            <person name="Apweiler R."/>
            <person name="Aturaliya R.N."/>
            <person name="Bailey T.L."/>
            <person name="Bansal M."/>
            <person name="Baxter L."/>
            <person name="Beisel K.W."/>
            <person name="Bersano T."/>
            <person name="Bono H."/>
            <person name="Chalk A.M."/>
            <person name="Chiu K.P."/>
            <person name="Choudhary V."/>
            <person name="Christoffels A."/>
            <person name="Clutterbuck D.R."/>
            <person name="Crowe M.L."/>
            <person name="Dalla E."/>
            <person name="Dalrymple B.P."/>
            <person name="de Bono B."/>
            <person name="Della Gatta G."/>
            <person name="di Bernardo D."/>
            <person name="Down T."/>
            <person name="Engstrom P."/>
            <person name="Fagiolini M."/>
            <person name="Faulkner G."/>
            <person name="Fletcher C.F."/>
            <person name="Fukushima T."/>
            <person name="Furuno M."/>
            <person name="Futaki S."/>
            <person name="Gariboldi M."/>
            <person name="Georgii-Hemming P."/>
            <person name="Gingeras T.R."/>
            <person name="Gojobori T."/>
            <person name="Green R.E."/>
            <person name="Gustincich S."/>
            <person name="Harbers M."/>
            <person name="Hayashi Y."/>
            <person name="Hensch T.K."/>
            <person name="Hirokawa N."/>
            <person name="Hill D."/>
            <person name="Huminiecki L."/>
            <person name="Iacono M."/>
            <person name="Ikeo K."/>
            <person name="Iwama A."/>
            <person name="Ishikawa T."/>
            <person name="Jakt M."/>
            <person name="Kanapin A."/>
            <person name="Katoh M."/>
            <person name="Kawasawa Y."/>
            <person name="Kelso J."/>
            <person name="Kitamura H."/>
            <person name="Kitano H."/>
            <person name="Kollias G."/>
            <person name="Krishnan S.P."/>
            <person name="Kruger A."/>
            <person name="Kummerfeld S.K."/>
            <person name="Kurochkin I.V."/>
            <person name="Lareau L.F."/>
            <person name="Lazarevic D."/>
            <person name="Lipovich L."/>
            <person name="Liu J."/>
            <person name="Liuni S."/>
            <person name="McWilliam S."/>
            <person name="Madan Babu M."/>
            <person name="Madera M."/>
            <person name="Marchionni L."/>
            <person name="Matsuda H."/>
            <person name="Matsuzawa S."/>
            <person name="Miki H."/>
            <person name="Mignone F."/>
            <person name="Miyake S."/>
            <person name="Morris K."/>
            <person name="Mottagui-Tabar S."/>
            <person name="Mulder N."/>
            <person name="Nakano N."/>
            <person name="Nakauchi H."/>
            <person name="Ng P."/>
            <person name="Nilsson R."/>
            <person name="Nishiguchi S."/>
            <person name="Nishikawa S."/>
            <person name="Nori F."/>
            <person name="Ohara O."/>
            <person name="Okazaki Y."/>
            <person name="Orlando V."/>
            <person name="Pang K.C."/>
            <person name="Pavan W.J."/>
            <person name="Pavesi G."/>
            <person name="Pesole G."/>
            <person name="Petrovsky N."/>
            <person name="Piazza S."/>
            <person name="Reed J."/>
            <person name="Reid J.F."/>
            <person name="Ring B.Z."/>
            <person name="Ringwald M."/>
            <person name="Rost B."/>
            <person name="Ruan Y."/>
            <person name="Salzberg S.L."/>
            <person name="Sandelin A."/>
            <person name="Schneider C."/>
            <person name="Schoenbach C."/>
            <person name="Sekiguchi K."/>
            <person name="Semple C.A."/>
            <person name="Seno S."/>
            <person name="Sessa L."/>
            <person name="Sheng Y."/>
            <person name="Shibata Y."/>
            <person name="Shimada H."/>
            <person name="Shimada K."/>
            <person name="Silva D."/>
            <person name="Sinclair B."/>
            <person name="Sperling S."/>
            <person name="Stupka E."/>
            <person name="Sugiura K."/>
            <person name="Sultana R."/>
            <person name="Takenaka Y."/>
            <person name="Taki K."/>
            <person name="Tammoja K."/>
            <person name="Tan S.L."/>
            <person name="Tang S."/>
            <person name="Taylor M.S."/>
            <person name="Tegner J."/>
            <person name="Teichmann S.A."/>
            <person name="Ueda H.R."/>
            <person name="van Nimwegen E."/>
            <person name="Verardo R."/>
            <person name="Wei C.L."/>
            <person name="Yagi K."/>
            <person name="Yamanishi H."/>
            <person name="Zabarovsky E."/>
            <person name="Zhu S."/>
            <person name="Zimmer A."/>
            <person name="Hide W."/>
            <person name="Bult C."/>
            <person name="Grimmond S.M."/>
            <person name="Teasdale R.D."/>
            <person name="Liu E.T."/>
            <person name="Brusic V."/>
            <person name="Quackenbush J."/>
            <person name="Wahlestedt C."/>
            <person name="Mattick J.S."/>
            <person name="Hume D.A."/>
            <person name="Kai C."/>
            <person name="Sasaki D."/>
            <person name="Tomaru Y."/>
            <person name="Fukuda S."/>
            <person name="Kanamori-Katayama M."/>
            <person name="Suzuki M."/>
            <person name="Aoki J."/>
            <person name="Arakawa T."/>
            <person name="Iida J."/>
            <person name="Imamura K."/>
            <person name="Itoh M."/>
            <person name="Kato T."/>
            <person name="Kawaji H."/>
            <person name="Kawagashira N."/>
            <person name="Kawashima T."/>
            <person name="Kojima M."/>
            <person name="Kondo S."/>
            <person name="Konno H."/>
            <person name="Nakano K."/>
            <person name="Ninomiya N."/>
            <person name="Nishio T."/>
            <person name="Okada M."/>
            <person name="Plessy C."/>
            <person name="Shibata K."/>
            <person name="Shiraki T."/>
            <person name="Suzuki S."/>
            <person name="Tagami M."/>
            <person name="Waki K."/>
            <person name="Watahiki A."/>
            <person name="Okamura-Oho Y."/>
            <person name="Suzuki H."/>
            <person name="Kawai J."/>
            <person name="Hayashizaki Y."/>
        </authorList>
    </citation>
    <scope>NUCLEOTIDE SEQUENCE [LARGE SCALE MRNA]</scope>
    <source>
        <strain>C57BL/6J</strain>
        <strain>NOD</strain>
        <tissue>Embryo</tissue>
    </source>
</reference>
<reference key="2">
    <citation type="journal article" date="2012" name="Cell Metab.">
        <title>Maintenance of metabolic homeostasis by Sestrin2 and Sestrin3.</title>
        <authorList>
            <person name="Lee J.H."/>
            <person name="Budanov A.V."/>
            <person name="Talukdar S."/>
            <person name="Park E.J."/>
            <person name="Park H.L."/>
            <person name="Park H.W."/>
            <person name="Bandyopadhyay G."/>
            <person name="Li N."/>
            <person name="Aghajan M."/>
            <person name="Jang I."/>
            <person name="Wolfe A.M."/>
            <person name="Perkins G.A."/>
            <person name="Ellisman M.H."/>
            <person name="Bier E."/>
            <person name="Scadeng M."/>
            <person name="Foretz M."/>
            <person name="Viollet B."/>
            <person name="Olefsky J."/>
            <person name="Karin M."/>
        </authorList>
    </citation>
    <scope>DISRUPTION PHENOTYPE</scope>
</reference>
<reference key="3">
    <citation type="journal article" date="2014" name="Cell">
        <title>Sestrins function as guanine nucleotide dissociation inhibitors for Rag GTPases to control mTORC1 signaling.</title>
        <authorList>
            <person name="Peng M."/>
            <person name="Yin N."/>
            <person name="Li M.O."/>
        </authorList>
    </citation>
    <scope>FUNCTION</scope>
    <scope>INTERACTION WITH RRAGA; RRAGB; RRAGC AND RRAGD</scope>
    <scope>TISSUE SPECIFICITY</scope>
    <scope>DISRUPTION PHENOTYPE</scope>
</reference>
<reference key="4">
    <citation type="journal article" date="2015" name="Diabetes">
        <title>Sestrin 3 protein enhances hepatic insulin sensitivity by direct activation of the mTORC2-Akt signaling.</title>
        <authorList>
            <person name="Tao R."/>
            <person name="Xiong X."/>
            <person name="Liangpunsakul S."/>
            <person name="Dong X.C."/>
        </authorList>
    </citation>
    <scope>FUNCTION</scope>
    <scope>INTERACTION WITH TORC2 COMPLEX</scope>
    <scope>SUBCELLULAR LOCATION</scope>
    <scope>DISRUPTION PHENOTYPE</scope>
</reference>
<proteinExistence type="evidence at protein level"/>
<gene>
    <name evidence="7" type="primary">Sesn3</name>
</gene>
<sequence length="492" mass="57021">MNRGGSSASASANYLLCTNCRKVLRKDKRIRVSQPLTRGPSAFIPEKEVVQANTADERTNFLVEEYSTSGRLDNITQVMSLHTQYLESFLRSQFYMLRMDGPLPLPDRHYIAIMAAARHQCSYLINMHVDEFLKTGGIAEWLNGLEYVPQRLRNLNEINKLLAHRPWLITKEHIQKLVKTGENNWSLPELVHAVVLLAHYHALASFVFGSGINPERDPGIANGFRLISVSSFCVCDLANDNSIENTSLAGSNFGIVDSLGELEALMERMKRLQEDREDDETTREEMTTRFEKEKKESLFVVPGETLHAFPHSDFEDDVIVTADVSRYIEDPSFGYEDFARRGEEHLPTFRAQDYTWENHGFSLVNRLYSDIGHLLDEKFRMVYNLTYNTMATHEDVDTTTLRRALFNYVHCMFGIRYDDYDYGEVNQLLERSLKVYIKTVTCYPERTTKRMYDSYWRQFTHSEKVHVNLLLMEARMQAELLYALRAITRHLT</sequence>
<comment type="function">
    <text evidence="1 4 5">May function as an intracellular leucine sensor that negatively regulates the TORC1 signaling pathway (PubMed:25259925). May also regulate the insulin-receptor signaling pathway through activation of TORC2 (PubMed:25377878). This metabolic regulator may also play a role in protection against oxidative and genotoxic stresses (By similarity). May prevent the accumulation of reactive oxygen species (ROS) through the alkylhydroperoxide reductase activity born by the N-terminal domain of the protein (By similarity).</text>
</comment>
<comment type="catalytic activity">
    <reaction evidence="1">
        <text>a hydroperoxide + L-cysteinyl-[protein] = S-hydroxy-L-cysteinyl-[protein] + an alcohol</text>
        <dbReference type="Rhea" id="RHEA:67124"/>
        <dbReference type="Rhea" id="RHEA-COMP:10131"/>
        <dbReference type="Rhea" id="RHEA-COMP:17193"/>
        <dbReference type="ChEBI" id="CHEBI:29950"/>
        <dbReference type="ChEBI" id="CHEBI:30879"/>
        <dbReference type="ChEBI" id="CHEBI:35924"/>
        <dbReference type="ChEBI" id="CHEBI:61973"/>
    </reaction>
    <physiologicalReaction direction="left-to-right" evidence="1">
        <dbReference type="Rhea" id="RHEA:67125"/>
    </physiologicalReaction>
</comment>
<comment type="subunit">
    <text evidence="2 4 5">Interacts with the GATOR2 complex which is composed of MIOS, SEC13, SEH1L, WDR24 and WDR59; the interaction is not regulated by leucine (By similarity). Interacts with RRAGA, RRAGB, RRAGC and RRAGD; may function as a guanine nucleotide dissociation inhibitor for RRAGs and regulate them (PubMed:25259925). Interacts with the TORC2 complex; through RICTOR (PubMed:25377878).</text>
</comment>
<comment type="subcellular location">
    <subcellularLocation>
        <location evidence="5">Cytoplasm</location>
    </subcellularLocation>
</comment>
<comment type="tissue specificity">
    <text evidence="4">Detected in liver and skeletal muscles.</text>
</comment>
<comment type="domain">
    <text evidence="1">The N-terminal domain may have an alkylhydroperoxide reductase activity.</text>
</comment>
<comment type="domain">
    <text evidence="1">The C-terminal domain mediates interaction with GATOR2 through which it regulates TORC1 signaling.</text>
</comment>
<comment type="disruption phenotype">
    <text evidence="3 4 5">Liver-specific Sesn3 knockout mice display insulin resistance and glucose intolerance (PubMed:25377878). Sesn2 and Sesn3 double knockout mice display insulin resistance and glucose intolerance (PubMed:22958918). Triple knockout mice lacking Sesn1, Sesn2 and Sesn3 do not display an embryonic lethal phenotype since they are born at an expected Mendelian ratio. Moreover, they are not distinguishable from their wild-type littermate. However, their survival at 10 days is dramatically affected. This is associated with a constitutive activation of TORC1 signaling in the liver, heart and skeletal muscle during postnatal fasting, that occurs between birth and suckling (PubMed:25259925).</text>
</comment>
<comment type="similarity">
    <text evidence="6">Belongs to the sestrin family.</text>
</comment>
<evidence type="ECO:0000250" key="1">
    <source>
        <dbReference type="UniProtKB" id="P58004"/>
    </source>
</evidence>
<evidence type="ECO:0000250" key="2">
    <source>
        <dbReference type="UniProtKB" id="P58005"/>
    </source>
</evidence>
<evidence type="ECO:0000269" key="3">
    <source>
    </source>
</evidence>
<evidence type="ECO:0000269" key="4">
    <source>
    </source>
</evidence>
<evidence type="ECO:0000269" key="5">
    <source>
    </source>
</evidence>
<evidence type="ECO:0000305" key="6"/>
<evidence type="ECO:0000312" key="7">
    <source>
        <dbReference type="MGI" id="MGI:1922997"/>
    </source>
</evidence>